<organism>
    <name type="scientific">Mus musculus</name>
    <name type="common">Mouse</name>
    <dbReference type="NCBI Taxonomy" id="10090"/>
    <lineage>
        <taxon>Eukaryota</taxon>
        <taxon>Metazoa</taxon>
        <taxon>Chordata</taxon>
        <taxon>Craniata</taxon>
        <taxon>Vertebrata</taxon>
        <taxon>Euteleostomi</taxon>
        <taxon>Mammalia</taxon>
        <taxon>Eutheria</taxon>
        <taxon>Euarchontoglires</taxon>
        <taxon>Glires</taxon>
        <taxon>Rodentia</taxon>
        <taxon>Myomorpha</taxon>
        <taxon>Muroidea</taxon>
        <taxon>Muridae</taxon>
        <taxon>Murinae</taxon>
        <taxon>Mus</taxon>
        <taxon>Mus</taxon>
    </lineage>
</organism>
<evidence type="ECO:0000250" key="1"/>
<evidence type="ECO:0000255" key="2"/>
<evidence type="ECO:0000255" key="3">
    <source>
        <dbReference type="PROSITE-ProRule" id="PRU00143"/>
    </source>
</evidence>
<evidence type="ECO:0000255" key="4">
    <source>
        <dbReference type="PROSITE-ProRule" id="PRU00653"/>
    </source>
</evidence>
<evidence type="ECO:0000305" key="5"/>
<protein>
    <recommendedName>
        <fullName>Serine protease HTRA4</fullName>
        <ecNumber>3.4.21.-</ecNumber>
    </recommendedName>
    <alternativeName>
        <fullName>High-temperature requirement factor A4</fullName>
    </alternativeName>
</protein>
<feature type="signal peptide" evidence="2">
    <location>
        <begin position="1"/>
        <end position="30"/>
    </location>
</feature>
<feature type="chain" id="PRO_0000417600" description="Serine protease HTRA4">
    <location>
        <begin position="31"/>
        <end position="483"/>
    </location>
</feature>
<feature type="domain" description="IGFBP N-terminal" evidence="4">
    <location>
        <begin position="35"/>
        <end position="113"/>
    </location>
</feature>
<feature type="domain" description="PDZ" evidence="3">
    <location>
        <begin position="379"/>
        <end position="471"/>
    </location>
</feature>
<feature type="region of interest" description="Serine protease" evidence="1">
    <location>
        <begin position="208"/>
        <end position="368"/>
    </location>
</feature>
<feature type="active site" description="Charge relay system" evidence="2">
    <location>
        <position position="224"/>
    </location>
</feature>
<feature type="active site" description="Charge relay system" evidence="2">
    <location>
        <position position="254"/>
    </location>
</feature>
<feature type="active site" description="Charge relay system" evidence="2">
    <location>
        <position position="332"/>
    </location>
</feature>
<feature type="disulfide bond" evidence="4">
    <location>
        <begin position="39"/>
        <end position="65"/>
    </location>
</feature>
<feature type="disulfide bond" evidence="4">
    <location>
        <begin position="43"/>
        <end position="67"/>
    </location>
</feature>
<feature type="disulfide bond" evidence="4">
    <location>
        <begin position="48"/>
        <end position="68"/>
    </location>
</feature>
<feature type="disulfide bond" evidence="4">
    <location>
        <begin position="54"/>
        <end position="71"/>
    </location>
</feature>
<feature type="disulfide bond" evidence="4">
    <location>
        <begin position="79"/>
        <end position="93"/>
    </location>
</feature>
<feature type="disulfide bond" evidence="4">
    <location>
        <begin position="87"/>
        <end position="110"/>
    </location>
</feature>
<dbReference type="EC" id="3.4.21.-"/>
<dbReference type="EMBL" id="AC156553">
    <property type="status" value="NOT_ANNOTATED_CDS"/>
    <property type="molecule type" value="Genomic_DNA"/>
</dbReference>
<dbReference type="EMBL" id="CH466580">
    <property type="protein sequence ID" value="EDL32845.1"/>
    <property type="molecule type" value="Genomic_DNA"/>
</dbReference>
<dbReference type="EMBL" id="BC132380">
    <property type="protein sequence ID" value="AAI32381.1"/>
    <property type="molecule type" value="mRNA"/>
</dbReference>
<dbReference type="EMBL" id="BC145842">
    <property type="protein sequence ID" value="AAI45843.1"/>
    <property type="molecule type" value="mRNA"/>
</dbReference>
<dbReference type="CCDS" id="CCDS40301.1"/>
<dbReference type="RefSeq" id="NP_001074656.1">
    <property type="nucleotide sequence ID" value="NM_001081187.3"/>
</dbReference>
<dbReference type="SMR" id="A2RT60"/>
<dbReference type="FunCoup" id="A2RT60">
    <property type="interactions" value="6"/>
</dbReference>
<dbReference type="STRING" id="10090.ENSMUSP00000081044"/>
<dbReference type="MEROPS" id="S01.329"/>
<dbReference type="PhosphoSitePlus" id="A2RT60"/>
<dbReference type="jPOST" id="A2RT60"/>
<dbReference type="PaxDb" id="10090-ENSMUSP00000081044"/>
<dbReference type="PeptideAtlas" id="A2RT60"/>
<dbReference type="ProteomicsDB" id="273323"/>
<dbReference type="Antibodypedia" id="23738">
    <property type="antibodies" value="105 antibodies from 19 providers"/>
</dbReference>
<dbReference type="DNASU" id="330723"/>
<dbReference type="Ensembl" id="ENSMUST00000084031.6">
    <property type="protein sequence ID" value="ENSMUSP00000081044.5"/>
    <property type="gene ID" value="ENSMUSG00000037406.8"/>
</dbReference>
<dbReference type="GeneID" id="330723"/>
<dbReference type="KEGG" id="mmu:330723"/>
<dbReference type="UCSC" id="uc009lfp.2">
    <property type="organism name" value="mouse"/>
</dbReference>
<dbReference type="AGR" id="MGI:3036260"/>
<dbReference type="CTD" id="203100"/>
<dbReference type="MGI" id="MGI:3036260">
    <property type="gene designation" value="Htra4"/>
</dbReference>
<dbReference type="VEuPathDB" id="HostDB:ENSMUSG00000037406"/>
<dbReference type="eggNOG" id="ENOG502RMZV">
    <property type="taxonomic scope" value="Eukaryota"/>
</dbReference>
<dbReference type="GeneTree" id="ENSGT00940000160760"/>
<dbReference type="HOGENOM" id="CLU_020120_6_2_1"/>
<dbReference type="InParanoid" id="A2RT60"/>
<dbReference type="OMA" id="WIEVVLQ"/>
<dbReference type="OrthoDB" id="4217619at2759"/>
<dbReference type="PhylomeDB" id="A2RT60"/>
<dbReference type="TreeFam" id="TF323480"/>
<dbReference type="BioGRID-ORCS" id="330723">
    <property type="hits" value="4 hits in 81 CRISPR screens"/>
</dbReference>
<dbReference type="PRO" id="PR:A2RT60"/>
<dbReference type="Proteomes" id="UP000000589">
    <property type="component" value="Chromosome 8"/>
</dbReference>
<dbReference type="RNAct" id="A2RT60">
    <property type="molecule type" value="protein"/>
</dbReference>
<dbReference type="Bgee" id="ENSMUSG00000037406">
    <property type="expression patterns" value="Expressed in tarsal region and 63 other cell types or tissues"/>
</dbReference>
<dbReference type="GO" id="GO:0005576">
    <property type="term" value="C:extracellular region"/>
    <property type="evidence" value="ECO:0007669"/>
    <property type="project" value="UniProtKB-SubCell"/>
</dbReference>
<dbReference type="GO" id="GO:0042802">
    <property type="term" value="F:identical protein binding"/>
    <property type="evidence" value="ECO:0007669"/>
    <property type="project" value="Ensembl"/>
</dbReference>
<dbReference type="GO" id="GO:0004252">
    <property type="term" value="F:serine-type endopeptidase activity"/>
    <property type="evidence" value="ECO:0007669"/>
    <property type="project" value="InterPro"/>
</dbReference>
<dbReference type="GO" id="GO:0006508">
    <property type="term" value="P:proteolysis"/>
    <property type="evidence" value="ECO:0007669"/>
    <property type="project" value="UniProtKB-KW"/>
</dbReference>
<dbReference type="CDD" id="cd06785">
    <property type="entry name" value="cpPDZ_HtrA-like"/>
    <property type="match status" value="1"/>
</dbReference>
<dbReference type="CDD" id="cd00104">
    <property type="entry name" value="KAZAL_FS"/>
    <property type="match status" value="1"/>
</dbReference>
<dbReference type="FunFam" id="2.40.10.120:FF:000002">
    <property type="entry name" value="HtrA serine peptidase 3"/>
    <property type="match status" value="1"/>
</dbReference>
<dbReference type="Gene3D" id="2.30.42.10">
    <property type="match status" value="1"/>
</dbReference>
<dbReference type="Gene3D" id="2.40.10.120">
    <property type="match status" value="1"/>
</dbReference>
<dbReference type="Gene3D" id="3.30.60.30">
    <property type="match status" value="1"/>
</dbReference>
<dbReference type="Gene3D" id="4.10.40.20">
    <property type="match status" value="1"/>
</dbReference>
<dbReference type="InterPro" id="IPR009030">
    <property type="entry name" value="Growth_fac_rcpt_cys_sf"/>
</dbReference>
<dbReference type="InterPro" id="IPR000867">
    <property type="entry name" value="IGFBP-like"/>
</dbReference>
<dbReference type="InterPro" id="IPR002350">
    <property type="entry name" value="Kazal_dom"/>
</dbReference>
<dbReference type="InterPro" id="IPR036058">
    <property type="entry name" value="Kazal_dom_sf"/>
</dbReference>
<dbReference type="InterPro" id="IPR001478">
    <property type="entry name" value="PDZ"/>
</dbReference>
<dbReference type="InterPro" id="IPR041489">
    <property type="entry name" value="PDZ_6"/>
</dbReference>
<dbReference type="InterPro" id="IPR036034">
    <property type="entry name" value="PDZ_sf"/>
</dbReference>
<dbReference type="InterPro" id="IPR009003">
    <property type="entry name" value="Peptidase_S1_PA"/>
</dbReference>
<dbReference type="InterPro" id="IPR001940">
    <property type="entry name" value="Peptidase_S1C"/>
</dbReference>
<dbReference type="PANTHER" id="PTHR22939">
    <property type="entry name" value="SERINE PROTEASE FAMILY S1C HTRA-RELATED"/>
    <property type="match status" value="1"/>
</dbReference>
<dbReference type="PANTHER" id="PTHR22939:SF105">
    <property type="entry name" value="SERINE PROTEASE HTRA4"/>
    <property type="match status" value="1"/>
</dbReference>
<dbReference type="Pfam" id="PF00219">
    <property type="entry name" value="IGFBP"/>
    <property type="match status" value="1"/>
</dbReference>
<dbReference type="Pfam" id="PF07648">
    <property type="entry name" value="Kazal_2"/>
    <property type="match status" value="1"/>
</dbReference>
<dbReference type="Pfam" id="PF17820">
    <property type="entry name" value="PDZ_6"/>
    <property type="match status" value="1"/>
</dbReference>
<dbReference type="Pfam" id="PF13365">
    <property type="entry name" value="Trypsin_2"/>
    <property type="match status" value="1"/>
</dbReference>
<dbReference type="PRINTS" id="PR00834">
    <property type="entry name" value="PROTEASES2C"/>
</dbReference>
<dbReference type="SMART" id="SM00121">
    <property type="entry name" value="IB"/>
    <property type="match status" value="1"/>
</dbReference>
<dbReference type="SMART" id="SM00280">
    <property type="entry name" value="KAZAL"/>
    <property type="match status" value="1"/>
</dbReference>
<dbReference type="SMART" id="SM00228">
    <property type="entry name" value="PDZ"/>
    <property type="match status" value="1"/>
</dbReference>
<dbReference type="SUPFAM" id="SSF57184">
    <property type="entry name" value="Growth factor receptor domain"/>
    <property type="match status" value="1"/>
</dbReference>
<dbReference type="SUPFAM" id="SSF100895">
    <property type="entry name" value="Kazal-type serine protease inhibitors"/>
    <property type="match status" value="1"/>
</dbReference>
<dbReference type="SUPFAM" id="SSF50156">
    <property type="entry name" value="PDZ domain-like"/>
    <property type="match status" value="1"/>
</dbReference>
<dbReference type="SUPFAM" id="SSF50494">
    <property type="entry name" value="Trypsin-like serine proteases"/>
    <property type="match status" value="1"/>
</dbReference>
<dbReference type="PROSITE" id="PS51323">
    <property type="entry name" value="IGFBP_N_2"/>
    <property type="match status" value="1"/>
</dbReference>
<dbReference type="PROSITE" id="PS50106">
    <property type="entry name" value="PDZ"/>
    <property type="match status" value="1"/>
</dbReference>
<accession>A2RT60</accession>
<keyword id="KW-1015">Disulfide bond</keyword>
<keyword id="KW-0378">Hydrolase</keyword>
<keyword id="KW-0645">Protease</keyword>
<keyword id="KW-1185">Reference proteome</keyword>
<keyword id="KW-0964">Secreted</keyword>
<keyword id="KW-0720">Serine protease</keyword>
<keyword id="KW-0732">Signal</keyword>
<reference key="1">
    <citation type="journal article" date="2009" name="PLoS Biol.">
        <title>Lineage-specific biology revealed by a finished genome assembly of the mouse.</title>
        <authorList>
            <person name="Church D.M."/>
            <person name="Goodstadt L."/>
            <person name="Hillier L.W."/>
            <person name="Zody M.C."/>
            <person name="Goldstein S."/>
            <person name="She X."/>
            <person name="Bult C.J."/>
            <person name="Agarwala R."/>
            <person name="Cherry J.L."/>
            <person name="DiCuccio M."/>
            <person name="Hlavina W."/>
            <person name="Kapustin Y."/>
            <person name="Meric P."/>
            <person name="Maglott D."/>
            <person name="Birtle Z."/>
            <person name="Marques A.C."/>
            <person name="Graves T."/>
            <person name="Zhou S."/>
            <person name="Teague B."/>
            <person name="Potamousis K."/>
            <person name="Churas C."/>
            <person name="Place M."/>
            <person name="Herschleb J."/>
            <person name="Runnheim R."/>
            <person name="Forrest D."/>
            <person name="Amos-Landgraf J."/>
            <person name="Schwartz D.C."/>
            <person name="Cheng Z."/>
            <person name="Lindblad-Toh K."/>
            <person name="Eichler E.E."/>
            <person name="Ponting C.P."/>
        </authorList>
    </citation>
    <scope>NUCLEOTIDE SEQUENCE [LARGE SCALE GENOMIC DNA]</scope>
    <source>
        <strain>C57BL/6J</strain>
    </source>
</reference>
<reference key="2">
    <citation type="submission" date="2005-07" db="EMBL/GenBank/DDBJ databases">
        <authorList>
            <person name="Mural R.J."/>
            <person name="Adams M.D."/>
            <person name="Myers E.W."/>
            <person name="Smith H.O."/>
            <person name="Venter J.C."/>
        </authorList>
    </citation>
    <scope>NUCLEOTIDE SEQUENCE [LARGE SCALE GENOMIC DNA]</scope>
</reference>
<reference key="3">
    <citation type="journal article" date="2004" name="Genome Res.">
        <title>The status, quality, and expansion of the NIH full-length cDNA project: the Mammalian Gene Collection (MGC).</title>
        <authorList>
            <consortium name="The MGC Project Team"/>
        </authorList>
    </citation>
    <scope>NUCLEOTIDE SEQUENCE [LARGE SCALE MRNA]</scope>
    <source>
        <tissue>Brain</tissue>
    </source>
</reference>
<comment type="function">
    <text evidence="1">Serine protease.</text>
</comment>
<comment type="subcellular location">
    <subcellularLocation>
        <location evidence="1">Secreted</location>
    </subcellularLocation>
</comment>
<comment type="similarity">
    <text evidence="5">Belongs to the peptidase S1C family.</text>
</comment>
<gene>
    <name type="primary">Htra4</name>
</gene>
<proteinExistence type="evidence at transcript level"/>
<name>HTRA4_MOUSE</name>
<sequence length="483" mass="51988">MSFQRLWAVRTQFLLLWLLLPAVPVPWAEARRSRVSLPCPDACDPTRCPTLPTCSAGLAPVPDRCGCCRVCAAAEGQECGGARGRPCAPRLRCGAPFSRDPSGGAWLGTCGCAEGAEDAVVCGSDGRTYPSLCALRKENRAARQRGALPAVPVQKGACEEAGTTRAGRLRRKYNFIAAVVEKVAPSVVHLQLFRRSPLTNQEIPSSSGSGFIVSEDGLIVTNAHVLTNQQKIQVELQSGARYEATVKDIDHKLDLALIKIEPDTELPVLLLGRSSDLRAGEFVVALGSPFSLQNTVTAGIVSTTQRGGRELGLKNSDIDYIQTDAIINHGNSGGPLVNLDGDVIGINTLKVTAGISFAIPSDRIRQFLEDYHERQLKGKAPLQKKYLGLRMLPLTLNLLQEMKRQDPEFPDVSSGVFVYEVIQGSAAASSGLRDHDVIVSINGQPVTTTTDVIEAVKDNDFLSIIVLRGSQTLFLTVTPEIIN</sequence>